<proteinExistence type="evidence at protein level"/>
<reference key="1">
    <citation type="journal article" date="1995" name="Biochim. Biophys. Acta">
        <title>Cloning, sequencing and expression of the L5, L21, L27a, L28, S5, S9, S10 and S29 human ribosomal protein mRNAs.</title>
        <authorList>
            <person name="Frigerio J.-M."/>
            <person name="Dagorn J.-C."/>
            <person name="Iovanna J.L."/>
        </authorList>
    </citation>
    <scope>NUCLEOTIDE SEQUENCE [MRNA] (ISOFORM 1)</scope>
    <source>
        <tissue>Colon</tissue>
    </source>
</reference>
<reference key="2">
    <citation type="submission" date="2004-06" db="EMBL/GenBank/DDBJ databases">
        <title>Cloning of human full open reading frames in Gateway(TM) system entry vector (pDONR201).</title>
        <authorList>
            <person name="Ebert L."/>
            <person name="Schick M."/>
            <person name="Neubert P."/>
            <person name="Schatten R."/>
            <person name="Henze S."/>
            <person name="Korn B."/>
        </authorList>
    </citation>
    <scope>NUCLEOTIDE SEQUENCE [LARGE SCALE MRNA] (ISOFORM 1)</scope>
</reference>
<reference key="3">
    <citation type="journal article" date="2004" name="Nat. Genet.">
        <title>Complete sequencing and characterization of 21,243 full-length human cDNAs.</title>
        <authorList>
            <person name="Ota T."/>
            <person name="Suzuki Y."/>
            <person name="Nishikawa T."/>
            <person name="Otsuki T."/>
            <person name="Sugiyama T."/>
            <person name="Irie R."/>
            <person name="Wakamatsu A."/>
            <person name="Hayashi K."/>
            <person name="Sato H."/>
            <person name="Nagai K."/>
            <person name="Kimura K."/>
            <person name="Makita H."/>
            <person name="Sekine M."/>
            <person name="Obayashi M."/>
            <person name="Nishi T."/>
            <person name="Shibahara T."/>
            <person name="Tanaka T."/>
            <person name="Ishii S."/>
            <person name="Yamamoto J."/>
            <person name="Saito K."/>
            <person name="Kawai Y."/>
            <person name="Isono Y."/>
            <person name="Nakamura Y."/>
            <person name="Nagahari K."/>
            <person name="Murakami K."/>
            <person name="Yasuda T."/>
            <person name="Iwayanagi T."/>
            <person name="Wagatsuma M."/>
            <person name="Shiratori A."/>
            <person name="Sudo H."/>
            <person name="Hosoiri T."/>
            <person name="Kaku Y."/>
            <person name="Kodaira H."/>
            <person name="Kondo H."/>
            <person name="Sugawara M."/>
            <person name="Takahashi M."/>
            <person name="Kanda K."/>
            <person name="Yokoi T."/>
            <person name="Furuya T."/>
            <person name="Kikkawa E."/>
            <person name="Omura Y."/>
            <person name="Abe K."/>
            <person name="Kamihara K."/>
            <person name="Katsuta N."/>
            <person name="Sato K."/>
            <person name="Tanikawa M."/>
            <person name="Yamazaki M."/>
            <person name="Ninomiya K."/>
            <person name="Ishibashi T."/>
            <person name="Yamashita H."/>
            <person name="Murakawa K."/>
            <person name="Fujimori K."/>
            <person name="Tanai H."/>
            <person name="Kimata M."/>
            <person name="Watanabe M."/>
            <person name="Hiraoka S."/>
            <person name="Chiba Y."/>
            <person name="Ishida S."/>
            <person name="Ono Y."/>
            <person name="Takiguchi S."/>
            <person name="Watanabe S."/>
            <person name="Yosida M."/>
            <person name="Hotuta T."/>
            <person name="Kusano J."/>
            <person name="Kanehori K."/>
            <person name="Takahashi-Fujii A."/>
            <person name="Hara H."/>
            <person name="Tanase T.-O."/>
            <person name="Nomura Y."/>
            <person name="Togiya S."/>
            <person name="Komai F."/>
            <person name="Hara R."/>
            <person name="Takeuchi K."/>
            <person name="Arita M."/>
            <person name="Imose N."/>
            <person name="Musashino K."/>
            <person name="Yuuki H."/>
            <person name="Oshima A."/>
            <person name="Sasaki N."/>
            <person name="Aotsuka S."/>
            <person name="Yoshikawa Y."/>
            <person name="Matsunawa H."/>
            <person name="Ichihara T."/>
            <person name="Shiohata N."/>
            <person name="Sano S."/>
            <person name="Moriya S."/>
            <person name="Momiyama H."/>
            <person name="Satoh N."/>
            <person name="Takami S."/>
            <person name="Terashima Y."/>
            <person name="Suzuki O."/>
            <person name="Nakagawa S."/>
            <person name="Senoh A."/>
            <person name="Mizoguchi H."/>
            <person name="Goto Y."/>
            <person name="Shimizu F."/>
            <person name="Wakebe H."/>
            <person name="Hishigaki H."/>
            <person name="Watanabe T."/>
            <person name="Sugiyama A."/>
            <person name="Takemoto M."/>
            <person name="Kawakami B."/>
            <person name="Yamazaki M."/>
            <person name="Watanabe K."/>
            <person name="Kumagai A."/>
            <person name="Itakura S."/>
            <person name="Fukuzumi Y."/>
            <person name="Fujimori Y."/>
            <person name="Komiyama M."/>
            <person name="Tashiro H."/>
            <person name="Tanigami A."/>
            <person name="Fujiwara T."/>
            <person name="Ono T."/>
            <person name="Yamada K."/>
            <person name="Fujii Y."/>
            <person name="Ozaki K."/>
            <person name="Hirao M."/>
            <person name="Ohmori Y."/>
            <person name="Kawabata A."/>
            <person name="Hikiji T."/>
            <person name="Kobatake N."/>
            <person name="Inagaki H."/>
            <person name="Ikema Y."/>
            <person name="Okamoto S."/>
            <person name="Okitani R."/>
            <person name="Kawakami T."/>
            <person name="Noguchi S."/>
            <person name="Itoh T."/>
            <person name="Shigeta K."/>
            <person name="Senba T."/>
            <person name="Matsumura K."/>
            <person name="Nakajima Y."/>
            <person name="Mizuno T."/>
            <person name="Morinaga M."/>
            <person name="Sasaki M."/>
            <person name="Togashi T."/>
            <person name="Oyama M."/>
            <person name="Hata H."/>
            <person name="Watanabe M."/>
            <person name="Komatsu T."/>
            <person name="Mizushima-Sugano J."/>
            <person name="Satoh T."/>
            <person name="Shirai Y."/>
            <person name="Takahashi Y."/>
            <person name="Nakagawa K."/>
            <person name="Okumura K."/>
            <person name="Nagase T."/>
            <person name="Nomura N."/>
            <person name="Kikuchi H."/>
            <person name="Masuho Y."/>
            <person name="Yamashita R."/>
            <person name="Nakai K."/>
            <person name="Yada T."/>
            <person name="Nakamura Y."/>
            <person name="Ohara O."/>
            <person name="Isogai T."/>
            <person name="Sugano S."/>
        </authorList>
    </citation>
    <scope>NUCLEOTIDE SEQUENCE [LARGE SCALE MRNA] (ISOFORMS 1 AND 2)</scope>
    <source>
        <tissue>Cerebellum</tissue>
        <tissue>Hippocampus</tissue>
    </source>
</reference>
<reference key="4">
    <citation type="journal article" date="2004" name="Nature">
        <title>The DNA sequence and biology of human chromosome 19.</title>
        <authorList>
            <person name="Grimwood J."/>
            <person name="Gordon L.A."/>
            <person name="Olsen A.S."/>
            <person name="Terry A."/>
            <person name="Schmutz J."/>
            <person name="Lamerdin J.E."/>
            <person name="Hellsten U."/>
            <person name="Goodstein D."/>
            <person name="Couronne O."/>
            <person name="Tran-Gyamfi M."/>
            <person name="Aerts A."/>
            <person name="Altherr M."/>
            <person name="Ashworth L."/>
            <person name="Bajorek E."/>
            <person name="Black S."/>
            <person name="Branscomb E."/>
            <person name="Caenepeel S."/>
            <person name="Carrano A.V."/>
            <person name="Caoile C."/>
            <person name="Chan Y.M."/>
            <person name="Christensen M."/>
            <person name="Cleland C.A."/>
            <person name="Copeland A."/>
            <person name="Dalin E."/>
            <person name="Dehal P."/>
            <person name="Denys M."/>
            <person name="Detter J.C."/>
            <person name="Escobar J."/>
            <person name="Flowers D."/>
            <person name="Fotopulos D."/>
            <person name="Garcia C."/>
            <person name="Georgescu A.M."/>
            <person name="Glavina T."/>
            <person name="Gomez M."/>
            <person name="Gonzales E."/>
            <person name="Groza M."/>
            <person name="Hammon N."/>
            <person name="Hawkins T."/>
            <person name="Haydu L."/>
            <person name="Ho I."/>
            <person name="Huang W."/>
            <person name="Israni S."/>
            <person name="Jett J."/>
            <person name="Kadner K."/>
            <person name="Kimball H."/>
            <person name="Kobayashi A."/>
            <person name="Larionov V."/>
            <person name="Leem S.-H."/>
            <person name="Lopez F."/>
            <person name="Lou Y."/>
            <person name="Lowry S."/>
            <person name="Malfatti S."/>
            <person name="Martinez D."/>
            <person name="McCready P.M."/>
            <person name="Medina C."/>
            <person name="Morgan J."/>
            <person name="Nelson K."/>
            <person name="Nolan M."/>
            <person name="Ovcharenko I."/>
            <person name="Pitluck S."/>
            <person name="Pollard M."/>
            <person name="Popkie A.P."/>
            <person name="Predki P."/>
            <person name="Quan G."/>
            <person name="Ramirez L."/>
            <person name="Rash S."/>
            <person name="Retterer J."/>
            <person name="Rodriguez A."/>
            <person name="Rogers S."/>
            <person name="Salamov A."/>
            <person name="Salazar A."/>
            <person name="She X."/>
            <person name="Smith D."/>
            <person name="Slezak T."/>
            <person name="Solovyev V."/>
            <person name="Thayer N."/>
            <person name="Tice H."/>
            <person name="Tsai M."/>
            <person name="Ustaszewska A."/>
            <person name="Vo N."/>
            <person name="Wagner M."/>
            <person name="Wheeler J."/>
            <person name="Wu K."/>
            <person name="Xie G."/>
            <person name="Yang J."/>
            <person name="Dubchak I."/>
            <person name="Furey T.S."/>
            <person name="DeJong P."/>
            <person name="Dickson M."/>
            <person name="Gordon D."/>
            <person name="Eichler E.E."/>
            <person name="Pennacchio L.A."/>
            <person name="Richardson P."/>
            <person name="Stubbs L."/>
            <person name="Rokhsar D.S."/>
            <person name="Myers R.M."/>
            <person name="Rubin E.M."/>
            <person name="Lucas S.M."/>
        </authorList>
    </citation>
    <scope>NUCLEOTIDE SEQUENCE [LARGE SCALE GENOMIC DNA]</scope>
</reference>
<reference key="5">
    <citation type="submission" date="2005-07" db="EMBL/GenBank/DDBJ databases">
        <authorList>
            <person name="Mural R.J."/>
            <person name="Istrail S."/>
            <person name="Sutton G.G."/>
            <person name="Florea L."/>
            <person name="Halpern A.L."/>
            <person name="Mobarry C.M."/>
            <person name="Lippert R."/>
            <person name="Walenz B."/>
            <person name="Shatkay H."/>
            <person name="Dew I."/>
            <person name="Miller J.R."/>
            <person name="Flanigan M.J."/>
            <person name="Edwards N.J."/>
            <person name="Bolanos R."/>
            <person name="Fasulo D."/>
            <person name="Halldorsson B.V."/>
            <person name="Hannenhalli S."/>
            <person name="Turner R."/>
            <person name="Yooseph S."/>
            <person name="Lu F."/>
            <person name="Nusskern D.R."/>
            <person name="Shue B.C."/>
            <person name="Zheng X.H."/>
            <person name="Zhong F."/>
            <person name="Delcher A.L."/>
            <person name="Huson D.H."/>
            <person name="Kravitz S.A."/>
            <person name="Mouchard L."/>
            <person name="Reinert K."/>
            <person name="Remington K.A."/>
            <person name="Clark A.G."/>
            <person name="Waterman M.S."/>
            <person name="Eichler E.E."/>
            <person name="Adams M.D."/>
            <person name="Hunkapiller M.W."/>
            <person name="Myers E.W."/>
            <person name="Venter J.C."/>
        </authorList>
    </citation>
    <scope>NUCLEOTIDE SEQUENCE [LARGE SCALE GENOMIC DNA]</scope>
</reference>
<reference key="6">
    <citation type="journal article" date="2004" name="Genome Res.">
        <title>The status, quality, and expansion of the NIH full-length cDNA project: the Mammalian Gene Collection (MGC).</title>
        <authorList>
            <consortium name="The MGC Project Team"/>
        </authorList>
    </citation>
    <scope>NUCLEOTIDE SEQUENCE [LARGE SCALE MRNA] (ISOFORMS 1 AND 3)</scope>
    <source>
        <tissue>B-cell</tissue>
        <tissue>Kidney</tissue>
        <tissue>Prostatic adenocarcinoma</tissue>
        <tissue>Uterus</tissue>
    </source>
</reference>
<reference key="7">
    <citation type="submission" date="2008-12" db="UniProtKB">
        <authorList>
            <person name="Bienvenut W.V."/>
            <person name="Boldt K."/>
            <person name="von Kriegsheim A."/>
            <person name="Lilla S."/>
            <person name="Lempens A."/>
            <person name="Kolch W."/>
        </authorList>
    </citation>
    <scope>PROTEIN SEQUENCE OF 2-11; 23-33; 40-58; 72-79 AND 120-127</scope>
    <scope>CLEAVAGE OF INITIATOR METHIONINE</scope>
    <scope>ACETYLATION AT SER-2</scope>
    <scope>IDENTIFICATION BY MASS SPECTROMETRY</scope>
    <source>
        <tissue>Hepatoma</tissue>
        <tissue>Ovarian carcinoma</tissue>
    </source>
</reference>
<reference key="8">
    <citation type="journal article" date="2003" name="J. Protein Chem.">
        <title>Characterization and analysis of posttranslational modifications of the human large cytoplasmic ribosomal subunit proteins by mass spectrometry and Edman sequencing.</title>
        <authorList>
            <person name="Odintsova T.I."/>
            <person name="Muller E.C."/>
            <person name="Ivanov A.V."/>
            <person name="Egorov T.A."/>
            <person name="Bienert R."/>
            <person name="Vladimirov S.N."/>
            <person name="Kostka S."/>
            <person name="Otto A."/>
            <person name="Wittmann-Liebold B."/>
            <person name="Karpova G.G."/>
        </authorList>
    </citation>
    <scope>ACETYLATION AT SER-2</scope>
    <scope>IDENTIFICATION BY MASS SPECTROMETRY</scope>
    <scope>FUNCTION</scope>
    <scope>SUBUNIT</scope>
</reference>
<reference key="9">
    <citation type="journal article" date="2009" name="Anal. Chem.">
        <title>Lys-N and trypsin cover complementary parts of the phosphoproteome in a refined SCX-based approach.</title>
        <authorList>
            <person name="Gauci S."/>
            <person name="Helbig A.O."/>
            <person name="Slijper M."/>
            <person name="Krijgsveld J."/>
            <person name="Heck A.J."/>
            <person name="Mohammed S."/>
        </authorList>
    </citation>
    <scope>ACETYLATION [LARGE SCALE ANALYSIS] AT SER-2</scope>
    <scope>CLEAVAGE OF INITIATOR METHIONINE [LARGE SCALE ANALYSIS]</scope>
    <scope>IDENTIFICATION BY MASS SPECTROMETRY [LARGE SCALE ANALYSIS]</scope>
</reference>
<reference key="10">
    <citation type="journal article" date="2010" name="Sci. Signal.">
        <title>Quantitative phosphoproteomics reveals widespread full phosphorylation site occupancy during mitosis.</title>
        <authorList>
            <person name="Olsen J.V."/>
            <person name="Vermeulen M."/>
            <person name="Santamaria A."/>
            <person name="Kumar C."/>
            <person name="Miller M.L."/>
            <person name="Jensen L.J."/>
            <person name="Gnad F."/>
            <person name="Cox J."/>
            <person name="Jensen T.S."/>
            <person name="Nigg E.A."/>
            <person name="Brunak S."/>
            <person name="Mann M."/>
        </authorList>
    </citation>
    <scope>PHOSPHORYLATION [LARGE SCALE ANALYSIS] AT SER-115</scope>
    <scope>IDENTIFICATION BY MASS SPECTROMETRY [LARGE SCALE ANALYSIS]</scope>
    <source>
        <tissue>Cervix carcinoma</tissue>
    </source>
</reference>
<reference key="11">
    <citation type="journal article" date="2011" name="BMC Syst. Biol.">
        <title>Initial characterization of the human central proteome.</title>
        <authorList>
            <person name="Burkard T.R."/>
            <person name="Planyavsky M."/>
            <person name="Kaupe I."/>
            <person name="Breitwieser F.P."/>
            <person name="Buerckstuemmer T."/>
            <person name="Bennett K.L."/>
            <person name="Superti-Furga G."/>
            <person name="Colinge J."/>
        </authorList>
    </citation>
    <scope>IDENTIFICATION BY MASS SPECTROMETRY [LARGE SCALE ANALYSIS]</scope>
</reference>
<reference key="12">
    <citation type="journal article" date="2012" name="Mol. Cell. Proteomics">
        <title>Comparative large-scale characterisation of plant vs. mammal proteins reveals similar and idiosyncratic N-alpha acetylation features.</title>
        <authorList>
            <person name="Bienvenut W.V."/>
            <person name="Sumpton D."/>
            <person name="Martinez A."/>
            <person name="Lilla S."/>
            <person name="Espagne C."/>
            <person name="Meinnel T."/>
            <person name="Giglione C."/>
        </authorList>
    </citation>
    <scope>ACETYLATION [LARGE SCALE ANALYSIS] AT SER-2</scope>
    <scope>CLEAVAGE OF INITIATOR METHIONINE [LARGE SCALE ANALYSIS]</scope>
    <scope>IDENTIFICATION BY MASS SPECTROMETRY [LARGE SCALE ANALYSIS]</scope>
</reference>
<reference key="13">
    <citation type="journal article" date="2014" name="Curr. Opin. Struct. Biol.">
        <title>A new system for naming ribosomal proteins.</title>
        <authorList>
            <person name="Ban N."/>
            <person name="Beckmann R."/>
            <person name="Cate J.H.D."/>
            <person name="Dinman J.D."/>
            <person name="Dragon F."/>
            <person name="Ellis S.R."/>
            <person name="Lafontaine D.L.J."/>
            <person name="Lindahl L."/>
            <person name="Liljas A."/>
            <person name="Lipton J.M."/>
            <person name="McAlear M.A."/>
            <person name="Moore P.B."/>
            <person name="Noller H.F."/>
            <person name="Ortega J."/>
            <person name="Panse V.G."/>
            <person name="Ramakrishnan V."/>
            <person name="Spahn C.M.T."/>
            <person name="Steitz T.A."/>
            <person name="Tchorzewski M."/>
            <person name="Tollervey D."/>
            <person name="Warren A.J."/>
            <person name="Williamson J.R."/>
            <person name="Wilson D."/>
            <person name="Yonath A."/>
            <person name="Yusupov M."/>
        </authorList>
    </citation>
    <scope>NOMENCLATURE</scope>
</reference>
<reference key="14">
    <citation type="journal article" date="2015" name="Proteomics">
        <title>N-terminome analysis of the human mitochondrial proteome.</title>
        <authorList>
            <person name="Vaca Jacome A.S."/>
            <person name="Rabilloud T."/>
            <person name="Schaeffer-Reiss C."/>
            <person name="Rompais M."/>
            <person name="Ayoub D."/>
            <person name="Lane L."/>
            <person name="Bairoch A."/>
            <person name="Van Dorsselaer A."/>
            <person name="Carapito C."/>
        </authorList>
    </citation>
    <scope>ACETYLATION [LARGE SCALE ANALYSIS] AT SER-2</scope>
    <scope>CLEAVAGE OF INITIATOR METHIONINE [LARGE SCALE ANALYSIS]</scope>
    <scope>IDENTIFICATION BY MASS SPECTROMETRY [LARGE SCALE ANALYSIS]</scope>
</reference>
<reference key="15">
    <citation type="journal article" date="2017" name="Nat. Struct. Mol. Biol.">
        <title>Site-specific mapping of the human SUMO proteome reveals co-modification with phosphorylation.</title>
        <authorList>
            <person name="Hendriks I.A."/>
            <person name="Lyon D."/>
            <person name="Young C."/>
            <person name="Jensen L.J."/>
            <person name="Vertegaal A.C."/>
            <person name="Nielsen M.L."/>
        </authorList>
    </citation>
    <scope>SUMOYLATION [LARGE SCALE ANALYSIS] AT LYS-58 AND LYS-65</scope>
    <scope>IDENTIFICATION BY MASS SPECTROMETRY [LARGE SCALE ANALYSIS]</scope>
</reference>
<reference key="16">
    <citation type="journal article" date="2013" name="Nature">
        <title>Structures of the human and Drosophila 80S ribosome.</title>
        <authorList>
            <person name="Anger A.M."/>
            <person name="Armache J.P."/>
            <person name="Berninghausen O."/>
            <person name="Habeck M."/>
            <person name="Subklewe M."/>
            <person name="Wilson D.N."/>
            <person name="Beckmann R."/>
        </authorList>
    </citation>
    <scope>STRUCTURE BY ELECTRON MICROSCOPY (5.0 ANGSTROMS)</scope>
    <scope>FUNCTION</scope>
    <scope>SUBUNIT</scope>
    <scope>SUBCELLULAR LOCATION</scope>
</reference>
<reference evidence="10 11 12 13" key="17">
    <citation type="journal article" date="2020" name="Nat. Commun.">
        <title>Structural snapshots of human pre-60S ribosomal particles before and after nuclear export.</title>
        <authorList>
            <person name="Liang X."/>
            <person name="Zuo M.Q."/>
            <person name="Zhang Y."/>
            <person name="Li N."/>
            <person name="Ma C."/>
            <person name="Dong M.Q."/>
            <person name="Gao N."/>
        </authorList>
    </citation>
    <scope>STRUCTURE BY ELECTRON MICROSCOPY (3.09 ANGSTROMS)</scope>
    <scope>FUNCTION</scope>
    <scope>SUBUNIT</scope>
</reference>
<name>RL28_HUMAN</name>
<feature type="initiator methionine" description="Removed" evidence="1 4 14 16 17">
    <location>
        <position position="1"/>
    </location>
</feature>
<feature type="chain" id="PRO_0000122389" description="Large ribosomal subunit protein eL28">
    <location>
        <begin position="2"/>
        <end position="137"/>
    </location>
</feature>
<feature type="modified residue" description="N-acetylserine" evidence="1 4 14 16 17">
    <location>
        <position position="2"/>
    </location>
</feature>
<feature type="modified residue" description="Phosphoserine" evidence="15">
    <location>
        <position position="115"/>
    </location>
</feature>
<feature type="cross-link" description="Glycyl lysine isopeptide (Lys-Gly) (interchain with G-Cter in SUMO2)" evidence="18">
    <location>
        <position position="58"/>
    </location>
</feature>
<feature type="cross-link" description="Glycyl lysine isopeptide (Lys-Gly) (interchain with G-Cter in SUMO2)" evidence="18">
    <location>
        <position position="65"/>
    </location>
</feature>
<feature type="splice variant" id="VSP_047026" description="In isoform 4." evidence="8">
    <original>GQRKPATSYVRTTINKNARATLSSIRHMIRKNKYRPDLRMAAIRRASAILRSQKPVMVKRKRTRPTKSS</original>
    <variation>E</variation>
    <location>
        <begin position="69"/>
        <end position="137"/>
    </location>
</feature>
<feature type="splice variant" id="VSP_047027" description="In isoform 5." evidence="8">
    <original>QRKPATSYVRTTINKNARATLSSIRHMIRKNKYRPDLRMAAIRRASAILRSQKPVMVKRKRTRPTKSS</original>
    <variation>EFCLVWARERPLSRVWEL</variation>
    <location>
        <begin position="70"/>
        <end position="137"/>
    </location>
</feature>
<feature type="splice variant" id="VSP_043026" description="In isoform 2." evidence="5">
    <original>AAIRRASAILRSQKPVMVKRKRTRPTKSS</original>
    <variation>VSWGLGIRLGETGQCCGEGPPTTGCNMGWRGMDSCFQPTPHTQHWPRGRLVECMG</variation>
    <location>
        <begin position="109"/>
        <end position="137"/>
    </location>
</feature>
<feature type="splice variant" id="VSP_046173" description="In isoform 3." evidence="6">
    <original>AAIRRASAILRSQKPVMVKRKRTRPTKSS</original>
    <variation>DMLASTGSGLCCSVAVQPWASSSTSLCLRTLICNMRVDRPYYSGLMRRLNVQNLLDCAHKS</variation>
    <location>
        <begin position="109"/>
        <end position="137"/>
    </location>
</feature>
<feature type="sequence variant" id="VAR_034460" description="In dbSNP:rs13502.">
    <original>R</original>
    <variation>L</variation>
    <location>
        <position position="66"/>
    </location>
</feature>
<feature type="sequence conflict" description="In Ref. 6; AAH10182." evidence="8" ref="6">
    <original>K</original>
    <variation>R</variation>
    <location>
        <position position="84"/>
    </location>
</feature>
<feature type="sequence conflict" description="In Ref. 1; AAA85657." evidence="8" ref="1">
    <original>S</original>
    <variation>T</variation>
    <location>
        <position position="120"/>
    </location>
</feature>
<evidence type="ECO:0000269" key="1">
    <source>
    </source>
</evidence>
<evidence type="ECO:0000269" key="2">
    <source>
    </source>
</evidence>
<evidence type="ECO:0000269" key="3">
    <source>
    </source>
</evidence>
<evidence type="ECO:0000269" key="4">
    <source ref="7"/>
</evidence>
<evidence type="ECO:0000303" key="5">
    <source>
    </source>
</evidence>
<evidence type="ECO:0000303" key="6">
    <source>
    </source>
</evidence>
<evidence type="ECO:0000303" key="7">
    <source>
    </source>
</evidence>
<evidence type="ECO:0000305" key="8"/>
<evidence type="ECO:0000305" key="9">
    <source>
    </source>
</evidence>
<evidence type="ECO:0007744" key="10">
    <source>
        <dbReference type="PDB" id="6LQM"/>
    </source>
</evidence>
<evidence type="ECO:0007744" key="11">
    <source>
        <dbReference type="PDB" id="6LSR"/>
    </source>
</evidence>
<evidence type="ECO:0007744" key="12">
    <source>
        <dbReference type="PDB" id="6LSS"/>
    </source>
</evidence>
<evidence type="ECO:0007744" key="13">
    <source>
        <dbReference type="PDB" id="6LU8"/>
    </source>
</evidence>
<evidence type="ECO:0007744" key="14">
    <source>
    </source>
</evidence>
<evidence type="ECO:0007744" key="15">
    <source>
    </source>
</evidence>
<evidence type="ECO:0007744" key="16">
    <source>
    </source>
</evidence>
<evidence type="ECO:0007744" key="17">
    <source>
    </source>
</evidence>
<evidence type="ECO:0007744" key="18">
    <source>
    </source>
</evidence>
<sequence>MSAHLQWMVVRNCSSFLIKRNKQTYSTEPNNLKARNSFRYNGLIHRKTVGVEPAADGKGVVVVIKRRSGQRKPATSYVRTTINKNARATLSSIRHMIRKNKYRPDLRMAAIRRASAILRSQKPVMVKRKRTRPTKSS</sequence>
<accession>P46779</accession>
<accession>B2R4A6</accession>
<accession>B4DEP9</accession>
<accession>C9JB50</accession>
<accession>E9PB24</accession>
<accession>G5E9L2</accession>
<accession>Q6IAY0</accession>
<accession>Q96FX1</accession>
<accession>Q9BWQ0</accession>
<comment type="function">
    <text evidence="2 3 9">Component of the large ribosomal subunit (PubMed:12962325, PubMed:23636399, PubMed:32669547). The ribosome is a large ribonucleoprotein complex responsible for the synthesis of proteins in the cell (PubMed:12962325, PubMed:23636399, PubMed:32669547).</text>
</comment>
<comment type="subunit">
    <text evidence="2 3 9">Component of the large ribosomal subunit (PubMed:12962325, PubMed:23636399, PubMed:32669547).</text>
</comment>
<comment type="interaction">
    <interactant intactId="EBI-366357">
        <id>P46779</id>
    </interactant>
    <interactant intactId="EBI-77613">
        <id>P05067</id>
        <label>APP</label>
    </interactant>
    <organismsDiffer>false</organismsDiffer>
    <experiments>3</experiments>
</comment>
<comment type="interaction">
    <interactant intactId="EBI-366357">
        <id>P46779</id>
    </interactant>
    <interactant intactId="EBI-748961">
        <id>O95273</id>
        <label>CCNDBP1</label>
    </interactant>
    <organismsDiffer>false</organismsDiffer>
    <experiments>7</experiments>
</comment>
<comment type="interaction">
    <interactant intactId="EBI-366357">
        <id>P46779</id>
    </interactant>
    <interactant intactId="EBI-1222919">
        <id>P43146</id>
        <label>DCC</label>
    </interactant>
    <organismsDiffer>false</organismsDiffer>
    <experiments>3</experiments>
</comment>
<comment type="interaction">
    <interactant intactId="EBI-366357">
        <id>P46779</id>
    </interactant>
    <interactant intactId="EBI-366182">
        <id>P10636</id>
        <label>MAPT</label>
    </interactant>
    <organismsDiffer>false</organismsDiffer>
    <experiments>4</experiments>
</comment>
<comment type="interaction">
    <interactant intactId="EBI-366357">
        <id>P46779</id>
    </interactant>
    <interactant intactId="EBI-348313">
        <id>P36578</id>
        <label>RPL4</label>
    </interactant>
    <organismsDiffer>false</organismsDiffer>
    <experiments>3</experiments>
</comment>
<comment type="subcellular location">
    <subcellularLocation>
        <location evidence="2">Cytoplasm</location>
    </subcellularLocation>
</comment>
<comment type="alternative products">
    <event type="alternative splicing"/>
    <isoform>
        <id>P46779-1</id>
        <name>1</name>
        <sequence type="displayed"/>
    </isoform>
    <isoform>
        <id>P46779-2</id>
        <name>2</name>
        <sequence type="described" ref="VSP_043026"/>
    </isoform>
    <isoform>
        <id>P46779-3</id>
        <name>3</name>
        <sequence type="described" ref="VSP_046173"/>
    </isoform>
    <isoform>
        <id>P46779-4</id>
        <name>4</name>
        <sequence type="described" ref="VSP_047026"/>
    </isoform>
    <isoform>
        <id>P46779-5</id>
        <name>5</name>
        <sequence type="described" ref="VSP_047027"/>
    </isoform>
</comment>
<comment type="similarity">
    <text evidence="8">Belongs to the eukaryotic ribosomal protein eL28 family.</text>
</comment>
<dbReference type="EMBL" id="U14969">
    <property type="protein sequence ID" value="AAA85657.1"/>
    <property type="molecule type" value="mRNA"/>
</dbReference>
<dbReference type="EMBL" id="CR457024">
    <property type="protein sequence ID" value="CAG33305.1"/>
    <property type="molecule type" value="mRNA"/>
</dbReference>
<dbReference type="EMBL" id="AK311760">
    <property type="protein sequence ID" value="BAG34703.1"/>
    <property type="molecule type" value="mRNA"/>
</dbReference>
<dbReference type="EMBL" id="AK293736">
    <property type="protein sequence ID" value="BAG57160.1"/>
    <property type="molecule type" value="mRNA"/>
</dbReference>
<dbReference type="EMBL" id="AC020922">
    <property type="status" value="NOT_ANNOTATED_CDS"/>
    <property type="molecule type" value="Genomic_DNA"/>
</dbReference>
<dbReference type="EMBL" id="CH471135">
    <property type="protein sequence ID" value="EAW72374.1"/>
    <property type="molecule type" value="Genomic_DNA"/>
</dbReference>
<dbReference type="EMBL" id="CH471135">
    <property type="protein sequence ID" value="EAW72375.1"/>
    <property type="molecule type" value="Genomic_DNA"/>
</dbReference>
<dbReference type="EMBL" id="CH471135">
    <property type="protein sequence ID" value="EAW72376.1"/>
    <property type="molecule type" value="Genomic_DNA"/>
</dbReference>
<dbReference type="EMBL" id="BC010173">
    <property type="protein sequence ID" value="AAH10173.1"/>
    <property type="molecule type" value="mRNA"/>
</dbReference>
<dbReference type="EMBL" id="BC010182">
    <property type="protein sequence ID" value="AAH10182.1"/>
    <property type="molecule type" value="mRNA"/>
</dbReference>
<dbReference type="EMBL" id="BC011582">
    <property type="protein sequence ID" value="AAH11582.1"/>
    <property type="molecule type" value="mRNA"/>
</dbReference>
<dbReference type="EMBL" id="BG777550">
    <property type="status" value="NOT_ANNOTATED_CDS"/>
    <property type="molecule type" value="mRNA"/>
</dbReference>
<dbReference type="CCDS" id="CCDS12924.1">
    <molecule id="P46779-1"/>
</dbReference>
<dbReference type="CCDS" id="CCDS46189.1">
    <molecule id="P46779-3"/>
</dbReference>
<dbReference type="CCDS" id="CCDS46190.1">
    <molecule id="P46779-2"/>
</dbReference>
<dbReference type="CCDS" id="CCDS46191.1">
    <molecule id="P46779-4"/>
</dbReference>
<dbReference type="CCDS" id="CCDS46192.1">
    <molecule id="P46779-5"/>
</dbReference>
<dbReference type="PIR" id="S55915">
    <property type="entry name" value="S55915"/>
</dbReference>
<dbReference type="RefSeq" id="NP_000982.2">
    <molecule id="P46779-1"/>
    <property type="nucleotide sequence ID" value="NM_000991.4"/>
</dbReference>
<dbReference type="RefSeq" id="NP_001129606.1">
    <molecule id="P46779-2"/>
    <property type="nucleotide sequence ID" value="NM_001136134.1"/>
</dbReference>
<dbReference type="RefSeq" id="NP_001129607.1">
    <molecule id="P46779-3"/>
    <property type="nucleotide sequence ID" value="NM_001136135.2"/>
</dbReference>
<dbReference type="RefSeq" id="NP_001129608.1">
    <molecule id="P46779-5"/>
    <property type="nucleotide sequence ID" value="NM_001136136.1"/>
</dbReference>
<dbReference type="RefSeq" id="NP_001129609.1">
    <molecule id="P46779-4"/>
    <property type="nucleotide sequence ID" value="NM_001136137.1"/>
</dbReference>
<dbReference type="PDB" id="4UG0">
    <property type="method" value="EM"/>
    <property type="chains" value="Lr=1-137"/>
</dbReference>
<dbReference type="PDB" id="4V6X">
    <property type="method" value="EM"/>
    <property type="resolution" value="5.00 A"/>
    <property type="chains" value="Cr=1-137"/>
</dbReference>
<dbReference type="PDB" id="5AJ0">
    <property type="method" value="EM"/>
    <property type="resolution" value="3.50 A"/>
    <property type="chains" value="At=1-137"/>
</dbReference>
<dbReference type="PDB" id="5LKS">
    <property type="method" value="EM"/>
    <property type="resolution" value="3.60 A"/>
    <property type="chains" value="Lr=1-137"/>
</dbReference>
<dbReference type="PDB" id="5T2C">
    <property type="method" value="EM"/>
    <property type="resolution" value="3.60 A"/>
    <property type="chains" value="k=1-137"/>
</dbReference>
<dbReference type="PDB" id="6IP5">
    <property type="method" value="EM"/>
    <property type="resolution" value="3.90 A"/>
    <property type="chains" value="2k=1-137"/>
</dbReference>
<dbReference type="PDB" id="6IP6">
    <property type="method" value="EM"/>
    <property type="resolution" value="4.50 A"/>
    <property type="chains" value="2k=1-137"/>
</dbReference>
<dbReference type="PDB" id="6IP8">
    <property type="method" value="EM"/>
    <property type="resolution" value="3.90 A"/>
    <property type="chains" value="2k=1-137"/>
</dbReference>
<dbReference type="PDB" id="6LQM">
    <property type="method" value="EM"/>
    <property type="resolution" value="3.09 A"/>
    <property type="chains" value="l=1-137"/>
</dbReference>
<dbReference type="PDB" id="6LSR">
    <property type="method" value="EM"/>
    <property type="resolution" value="3.13 A"/>
    <property type="chains" value="l=1-137"/>
</dbReference>
<dbReference type="PDB" id="6LSS">
    <property type="method" value="EM"/>
    <property type="resolution" value="3.23 A"/>
    <property type="chains" value="l=1-137"/>
</dbReference>
<dbReference type="PDB" id="6LU8">
    <property type="method" value="EM"/>
    <property type="resolution" value="3.13 A"/>
    <property type="chains" value="l=1-137"/>
</dbReference>
<dbReference type="PDB" id="6OLE">
    <property type="method" value="EM"/>
    <property type="resolution" value="3.10 A"/>
    <property type="chains" value="r=2-123"/>
</dbReference>
<dbReference type="PDB" id="6OLF">
    <property type="method" value="EM"/>
    <property type="resolution" value="3.90 A"/>
    <property type="chains" value="r=2-123"/>
</dbReference>
<dbReference type="PDB" id="6OLG">
    <property type="method" value="EM"/>
    <property type="resolution" value="3.40 A"/>
    <property type="chains" value="At=2-123"/>
</dbReference>
<dbReference type="PDB" id="6OLI">
    <property type="method" value="EM"/>
    <property type="resolution" value="3.50 A"/>
    <property type="chains" value="r=2-123"/>
</dbReference>
<dbReference type="PDB" id="6OLZ">
    <property type="method" value="EM"/>
    <property type="resolution" value="3.90 A"/>
    <property type="chains" value="At=2-123"/>
</dbReference>
<dbReference type="PDB" id="6OM0">
    <property type="method" value="EM"/>
    <property type="resolution" value="3.10 A"/>
    <property type="chains" value="r=2-123"/>
</dbReference>
<dbReference type="PDB" id="6OM7">
    <property type="method" value="EM"/>
    <property type="resolution" value="3.70 A"/>
    <property type="chains" value="r=2-123"/>
</dbReference>
<dbReference type="PDB" id="6QZP">
    <property type="method" value="EM"/>
    <property type="resolution" value="2.90 A"/>
    <property type="chains" value="Lr=2-126"/>
</dbReference>
<dbReference type="PDB" id="6W6L">
    <property type="method" value="EM"/>
    <property type="resolution" value="3.84 A"/>
    <property type="chains" value="r=1-137"/>
</dbReference>
<dbReference type="PDB" id="6XA1">
    <property type="method" value="EM"/>
    <property type="resolution" value="2.80 A"/>
    <property type="chains" value="Lr=2-126"/>
</dbReference>
<dbReference type="PDB" id="6Y0G">
    <property type="method" value="EM"/>
    <property type="resolution" value="3.20 A"/>
    <property type="chains" value="Lr=1-137"/>
</dbReference>
<dbReference type="PDB" id="6Y2L">
    <property type="method" value="EM"/>
    <property type="resolution" value="3.00 A"/>
    <property type="chains" value="Lr=1-137"/>
</dbReference>
<dbReference type="PDB" id="6Y57">
    <property type="method" value="EM"/>
    <property type="resolution" value="3.50 A"/>
    <property type="chains" value="Lr=1-137"/>
</dbReference>
<dbReference type="PDB" id="6Y6X">
    <property type="method" value="EM"/>
    <property type="resolution" value="2.80 A"/>
    <property type="chains" value="Lr=2-126"/>
</dbReference>
<dbReference type="PDB" id="6Z6L">
    <property type="method" value="EM"/>
    <property type="resolution" value="3.00 A"/>
    <property type="chains" value="Lr=1-137"/>
</dbReference>
<dbReference type="PDB" id="6Z6M">
    <property type="method" value="EM"/>
    <property type="resolution" value="3.10 A"/>
    <property type="chains" value="Lr=1-137"/>
</dbReference>
<dbReference type="PDB" id="6Z6N">
    <property type="method" value="EM"/>
    <property type="resolution" value="2.90 A"/>
    <property type="chains" value="Lr=1-137"/>
</dbReference>
<dbReference type="PDB" id="6ZM7">
    <property type="method" value="EM"/>
    <property type="resolution" value="2.70 A"/>
    <property type="chains" value="Lr=1-137"/>
</dbReference>
<dbReference type="PDB" id="6ZME">
    <property type="method" value="EM"/>
    <property type="resolution" value="3.00 A"/>
    <property type="chains" value="Lr=1-137"/>
</dbReference>
<dbReference type="PDB" id="6ZMI">
    <property type="method" value="EM"/>
    <property type="resolution" value="2.60 A"/>
    <property type="chains" value="Lr=1-137"/>
</dbReference>
<dbReference type="PDB" id="6ZMO">
    <property type="method" value="EM"/>
    <property type="resolution" value="3.10 A"/>
    <property type="chains" value="Lr=1-137"/>
</dbReference>
<dbReference type="PDB" id="7BHP">
    <property type="method" value="EM"/>
    <property type="resolution" value="3.30 A"/>
    <property type="chains" value="Lr=1-137"/>
</dbReference>
<dbReference type="PDB" id="7F5S">
    <property type="method" value="EM"/>
    <property type="resolution" value="2.72 A"/>
    <property type="chains" value="Lr=1-137"/>
</dbReference>
<dbReference type="PDB" id="7OW7">
    <property type="method" value="EM"/>
    <property type="resolution" value="2.20 A"/>
    <property type="chains" value="k=1-137"/>
</dbReference>
<dbReference type="PDB" id="7QVP">
    <property type="method" value="EM"/>
    <property type="resolution" value="3.00 A"/>
    <property type="chains" value="Lr/Mr=1-137"/>
</dbReference>
<dbReference type="PDB" id="7XNX">
    <property type="method" value="EM"/>
    <property type="resolution" value="2.70 A"/>
    <property type="chains" value="Lr=1-137"/>
</dbReference>
<dbReference type="PDB" id="7XNY">
    <property type="method" value="EM"/>
    <property type="resolution" value="2.50 A"/>
    <property type="chains" value="Lr=1-137"/>
</dbReference>
<dbReference type="PDB" id="8A3D">
    <property type="method" value="EM"/>
    <property type="resolution" value="1.67 A"/>
    <property type="chains" value="k=1-137"/>
</dbReference>
<dbReference type="PDB" id="8FKQ">
    <property type="method" value="EM"/>
    <property type="resolution" value="2.76 A"/>
    <property type="chains" value="LL=1-137"/>
</dbReference>
<dbReference type="PDB" id="8FKS">
    <property type="method" value="EM"/>
    <property type="resolution" value="2.88 A"/>
    <property type="chains" value="LL=1-137"/>
</dbReference>
<dbReference type="PDB" id="8FKU">
    <property type="method" value="EM"/>
    <property type="resolution" value="2.82 A"/>
    <property type="chains" value="LL=1-137"/>
</dbReference>
<dbReference type="PDB" id="8FKW">
    <property type="method" value="EM"/>
    <property type="resolution" value="2.50 A"/>
    <property type="chains" value="LL=1-137"/>
</dbReference>
<dbReference type="PDB" id="8FKX">
    <property type="method" value="EM"/>
    <property type="resolution" value="2.59 A"/>
    <property type="chains" value="LL=1-137"/>
</dbReference>
<dbReference type="PDB" id="8FKY">
    <property type="method" value="EM"/>
    <property type="resolution" value="2.67 A"/>
    <property type="chains" value="LL=1-137"/>
</dbReference>
<dbReference type="PDB" id="8FKZ">
    <property type="method" value="EM"/>
    <property type="resolution" value="3.04 A"/>
    <property type="chains" value="LL=1-137"/>
</dbReference>
<dbReference type="PDB" id="8FL0">
    <property type="method" value="EM"/>
    <property type="resolution" value="2.91 A"/>
    <property type="chains" value="LL=1-137"/>
</dbReference>
<dbReference type="PDB" id="8FL2">
    <property type="method" value="EM"/>
    <property type="resolution" value="2.67 A"/>
    <property type="chains" value="LL=1-137"/>
</dbReference>
<dbReference type="PDB" id="8FL3">
    <property type="method" value="EM"/>
    <property type="resolution" value="2.53 A"/>
    <property type="chains" value="LL=1-137"/>
</dbReference>
<dbReference type="PDB" id="8FL4">
    <property type="method" value="EM"/>
    <property type="resolution" value="2.89 A"/>
    <property type="chains" value="LL=1-137"/>
</dbReference>
<dbReference type="PDB" id="8FL6">
    <property type="method" value="EM"/>
    <property type="resolution" value="2.62 A"/>
    <property type="chains" value="LL=1-137"/>
</dbReference>
<dbReference type="PDB" id="8FL7">
    <property type="method" value="EM"/>
    <property type="resolution" value="2.55 A"/>
    <property type="chains" value="LL=1-137"/>
</dbReference>
<dbReference type="PDB" id="8FL9">
    <property type="method" value="EM"/>
    <property type="resolution" value="2.75 A"/>
    <property type="chains" value="LL=1-137"/>
</dbReference>
<dbReference type="PDB" id="8FLA">
    <property type="method" value="EM"/>
    <property type="resolution" value="2.63 A"/>
    <property type="chains" value="LL=1-137"/>
</dbReference>
<dbReference type="PDB" id="8FLB">
    <property type="method" value="EM"/>
    <property type="resolution" value="2.55 A"/>
    <property type="chains" value="LL=1-137"/>
</dbReference>
<dbReference type="PDB" id="8FLC">
    <property type="method" value="EM"/>
    <property type="resolution" value="2.76 A"/>
    <property type="chains" value="LL=1-137"/>
</dbReference>
<dbReference type="PDB" id="8FLD">
    <property type="method" value="EM"/>
    <property type="resolution" value="2.58 A"/>
    <property type="chains" value="LL=1-137"/>
</dbReference>
<dbReference type="PDB" id="8FLE">
    <property type="method" value="EM"/>
    <property type="resolution" value="2.48 A"/>
    <property type="chains" value="LL=1-137"/>
</dbReference>
<dbReference type="PDB" id="8FLF">
    <property type="method" value="EM"/>
    <property type="resolution" value="2.65 A"/>
    <property type="chains" value="LL=1-137"/>
</dbReference>
<dbReference type="PDB" id="8G5Y">
    <property type="method" value="EM"/>
    <property type="resolution" value="2.29 A"/>
    <property type="chains" value="Lr=1-137"/>
</dbReference>
<dbReference type="PDB" id="8G5Z">
    <property type="method" value="EM"/>
    <property type="resolution" value="2.64 A"/>
    <property type="chains" value="Lr=2-126"/>
</dbReference>
<dbReference type="PDB" id="8G60">
    <property type="method" value="EM"/>
    <property type="resolution" value="2.54 A"/>
    <property type="chains" value="Lr=1-137"/>
</dbReference>
<dbReference type="PDB" id="8G61">
    <property type="method" value="EM"/>
    <property type="resolution" value="2.94 A"/>
    <property type="chains" value="Lr=1-137"/>
</dbReference>
<dbReference type="PDB" id="8G6J">
    <property type="method" value="EM"/>
    <property type="resolution" value="2.80 A"/>
    <property type="chains" value="Lr=1-137"/>
</dbReference>
<dbReference type="PDB" id="8GLP">
    <property type="method" value="EM"/>
    <property type="resolution" value="1.67 A"/>
    <property type="chains" value="Lr=1-137"/>
</dbReference>
<dbReference type="PDB" id="8IDT">
    <property type="method" value="EM"/>
    <property type="resolution" value="2.80 A"/>
    <property type="chains" value="l=1-137"/>
</dbReference>
<dbReference type="PDB" id="8IDY">
    <property type="method" value="EM"/>
    <property type="resolution" value="3.00 A"/>
    <property type="chains" value="l=1-137"/>
</dbReference>
<dbReference type="PDB" id="8IE3">
    <property type="method" value="EM"/>
    <property type="resolution" value="3.30 A"/>
    <property type="chains" value="l=1-137"/>
</dbReference>
<dbReference type="PDB" id="8IFD">
    <property type="method" value="EM"/>
    <property type="resolution" value="2.59 A"/>
    <property type="chains" value="2k=1-137"/>
</dbReference>
<dbReference type="PDB" id="8IFE">
    <property type="method" value="EM"/>
    <property type="resolution" value="2.57 A"/>
    <property type="chains" value="2k=1-137"/>
</dbReference>
<dbReference type="PDB" id="8INE">
    <property type="method" value="EM"/>
    <property type="resolution" value="3.20 A"/>
    <property type="chains" value="l=1-137"/>
</dbReference>
<dbReference type="PDB" id="8INF">
    <property type="method" value="EM"/>
    <property type="resolution" value="3.00 A"/>
    <property type="chains" value="l=1-137"/>
</dbReference>
<dbReference type="PDB" id="8INK">
    <property type="method" value="EM"/>
    <property type="resolution" value="3.20 A"/>
    <property type="chains" value="l=1-137"/>
</dbReference>
<dbReference type="PDB" id="8IPD">
    <property type="method" value="EM"/>
    <property type="resolution" value="3.20 A"/>
    <property type="chains" value="l=1-137"/>
</dbReference>
<dbReference type="PDB" id="8IPX">
    <property type="method" value="EM"/>
    <property type="resolution" value="4.30 A"/>
    <property type="chains" value="l=1-137"/>
</dbReference>
<dbReference type="PDB" id="8IPY">
    <property type="method" value="EM"/>
    <property type="resolution" value="3.20 A"/>
    <property type="chains" value="l=1-137"/>
</dbReference>
<dbReference type="PDB" id="8IR1">
    <property type="method" value="EM"/>
    <property type="resolution" value="3.30 A"/>
    <property type="chains" value="l=1-137"/>
</dbReference>
<dbReference type="PDB" id="8IR3">
    <property type="method" value="EM"/>
    <property type="resolution" value="3.50 A"/>
    <property type="chains" value="l=1-137"/>
</dbReference>
<dbReference type="PDB" id="8JDJ">
    <property type="method" value="EM"/>
    <property type="resolution" value="2.50 A"/>
    <property type="chains" value="v=1-137"/>
</dbReference>
<dbReference type="PDB" id="8JDK">
    <property type="method" value="EM"/>
    <property type="resolution" value="2.26 A"/>
    <property type="chains" value="v=1-137"/>
</dbReference>
<dbReference type="PDB" id="8JDL">
    <property type="method" value="EM"/>
    <property type="resolution" value="2.42 A"/>
    <property type="chains" value="v=1-137"/>
</dbReference>
<dbReference type="PDB" id="8JDM">
    <property type="method" value="EM"/>
    <property type="resolution" value="2.67 A"/>
    <property type="chains" value="v=1-137"/>
</dbReference>
<dbReference type="PDB" id="8K2C">
    <property type="method" value="EM"/>
    <property type="resolution" value="2.40 A"/>
    <property type="chains" value="Lr=1-137"/>
</dbReference>
<dbReference type="PDB" id="8OHD">
    <property type="method" value="EM"/>
    <property type="resolution" value="3.10 A"/>
    <property type="chains" value="Lr=1-137"/>
</dbReference>
<dbReference type="PDB" id="8OJ0">
    <property type="method" value="EM"/>
    <property type="resolution" value="3.30 A"/>
    <property type="chains" value="Lr=1-137"/>
</dbReference>
<dbReference type="PDB" id="8OJ5">
    <property type="method" value="EM"/>
    <property type="resolution" value="2.90 A"/>
    <property type="chains" value="Lr=1-137"/>
</dbReference>
<dbReference type="PDB" id="8OJ8">
    <property type="method" value="EM"/>
    <property type="resolution" value="3.30 A"/>
    <property type="chains" value="Lr=1-137"/>
</dbReference>
<dbReference type="PDB" id="8QFD">
    <property type="method" value="EM"/>
    <property type="resolution" value="2.20 A"/>
    <property type="chains" value="r=1-137"/>
</dbReference>
<dbReference type="PDB" id="8QOI">
    <property type="method" value="EM"/>
    <property type="resolution" value="1.90 A"/>
    <property type="chains" value="Lr=1-137"/>
</dbReference>
<dbReference type="PDB" id="8QYX">
    <property type="method" value="EM"/>
    <property type="resolution" value="1.78 A"/>
    <property type="chains" value="k1=1-137"/>
</dbReference>
<dbReference type="PDB" id="8RL2">
    <property type="method" value="EM"/>
    <property type="resolution" value="2.84 A"/>
    <property type="chains" value="Lr=1-137"/>
</dbReference>
<dbReference type="PDB" id="8UKB">
    <property type="method" value="EM"/>
    <property type="resolution" value="3.05 A"/>
    <property type="chains" value="Lr=2-126"/>
</dbReference>
<dbReference type="PDB" id="8XSX">
    <property type="method" value="EM"/>
    <property type="resolution" value="2.40 A"/>
    <property type="chains" value="Lr=1-137"/>
</dbReference>
<dbReference type="PDB" id="8XSY">
    <property type="method" value="EM"/>
    <property type="resolution" value="3.00 A"/>
    <property type="chains" value="Lr=1-137"/>
</dbReference>
<dbReference type="PDB" id="8XSZ">
    <property type="method" value="EM"/>
    <property type="resolution" value="3.20 A"/>
    <property type="chains" value="Lr=1-137"/>
</dbReference>
<dbReference type="PDB" id="8Y0W">
    <property type="method" value="EM"/>
    <property type="resolution" value="3.40 A"/>
    <property type="chains" value="Lr=1-137"/>
</dbReference>
<dbReference type="PDB" id="8Y0X">
    <property type="method" value="EM"/>
    <property type="resolution" value="3.30 A"/>
    <property type="chains" value="Lr=1-137"/>
</dbReference>
<dbReference type="PDB" id="8YOO">
    <property type="method" value="EM"/>
    <property type="resolution" value="2.00 A"/>
    <property type="chains" value="Lr=1-137"/>
</dbReference>
<dbReference type="PDB" id="8YOP">
    <property type="method" value="EM"/>
    <property type="resolution" value="2.20 A"/>
    <property type="chains" value="Lr=1-137"/>
</dbReference>
<dbReference type="PDB" id="9C3H">
    <property type="method" value="EM"/>
    <property type="resolution" value="2.00 A"/>
    <property type="chains" value="Ll=2-137"/>
</dbReference>
<dbReference type="PDB" id="9FPZ">
    <property type="method" value="EM"/>
    <property type="resolution" value="2.69 A"/>
    <property type="chains" value="Lr=1-137"/>
</dbReference>
<dbReference type="PDB" id="9FQ0">
    <property type="method" value="EM"/>
    <property type="resolution" value="4.67 A"/>
    <property type="chains" value="Lr=1-137"/>
</dbReference>
<dbReference type="PDB" id="9G8M">
    <property type="method" value="EM"/>
    <property type="resolution" value="3.30 A"/>
    <property type="chains" value="Lr=1-137"/>
</dbReference>
<dbReference type="PDB" id="9GMO">
    <property type="method" value="EM"/>
    <property type="resolution" value="2.59 A"/>
    <property type="chains" value="k=1-137"/>
</dbReference>
<dbReference type="PDBsum" id="4UG0"/>
<dbReference type="PDBsum" id="4V6X"/>
<dbReference type="PDBsum" id="5AJ0"/>
<dbReference type="PDBsum" id="5LKS"/>
<dbReference type="PDBsum" id="5T2C"/>
<dbReference type="PDBsum" id="6IP5"/>
<dbReference type="PDBsum" id="6IP6"/>
<dbReference type="PDBsum" id="6IP8"/>
<dbReference type="PDBsum" id="6LQM"/>
<dbReference type="PDBsum" id="6LSR"/>
<dbReference type="PDBsum" id="6LSS"/>
<dbReference type="PDBsum" id="6LU8"/>
<dbReference type="PDBsum" id="6OLE"/>
<dbReference type="PDBsum" id="6OLF"/>
<dbReference type="PDBsum" id="6OLG"/>
<dbReference type="PDBsum" id="6OLI"/>
<dbReference type="PDBsum" id="6OLZ"/>
<dbReference type="PDBsum" id="6OM0"/>
<dbReference type="PDBsum" id="6OM7"/>
<dbReference type="PDBsum" id="6QZP"/>
<dbReference type="PDBsum" id="6W6L"/>
<dbReference type="PDBsum" id="6XA1"/>
<dbReference type="PDBsum" id="6Y0G"/>
<dbReference type="PDBsum" id="6Y2L"/>
<dbReference type="PDBsum" id="6Y57"/>
<dbReference type="PDBsum" id="6Y6X"/>
<dbReference type="PDBsum" id="6Z6L"/>
<dbReference type="PDBsum" id="6Z6M"/>
<dbReference type="PDBsum" id="6Z6N"/>
<dbReference type="PDBsum" id="6ZM7"/>
<dbReference type="PDBsum" id="6ZME"/>
<dbReference type="PDBsum" id="6ZMI"/>
<dbReference type="PDBsum" id="6ZMO"/>
<dbReference type="PDBsum" id="7BHP"/>
<dbReference type="PDBsum" id="7F5S"/>
<dbReference type="PDBsum" id="7OW7"/>
<dbReference type="PDBsum" id="7QVP"/>
<dbReference type="PDBsum" id="7XNX"/>
<dbReference type="PDBsum" id="7XNY"/>
<dbReference type="PDBsum" id="8A3D"/>
<dbReference type="PDBsum" id="8FKQ"/>
<dbReference type="PDBsum" id="8FKS"/>
<dbReference type="PDBsum" id="8FKU"/>
<dbReference type="PDBsum" id="8FKW"/>
<dbReference type="PDBsum" id="8FKX"/>
<dbReference type="PDBsum" id="8FKY"/>
<dbReference type="PDBsum" id="8FKZ"/>
<dbReference type="PDBsum" id="8FL0"/>
<dbReference type="PDBsum" id="8FL2"/>
<dbReference type="PDBsum" id="8FL3"/>
<dbReference type="PDBsum" id="8FL4"/>
<dbReference type="PDBsum" id="8FL6"/>
<dbReference type="PDBsum" id="8FL7"/>
<dbReference type="PDBsum" id="8FL9"/>
<dbReference type="PDBsum" id="8FLA"/>
<dbReference type="PDBsum" id="8FLB"/>
<dbReference type="PDBsum" id="8FLC"/>
<dbReference type="PDBsum" id="8FLD"/>
<dbReference type="PDBsum" id="8FLE"/>
<dbReference type="PDBsum" id="8FLF"/>
<dbReference type="PDBsum" id="8G5Y"/>
<dbReference type="PDBsum" id="8G5Z"/>
<dbReference type="PDBsum" id="8G60"/>
<dbReference type="PDBsum" id="8G61"/>
<dbReference type="PDBsum" id="8G6J"/>
<dbReference type="PDBsum" id="8GLP"/>
<dbReference type="PDBsum" id="8IDT"/>
<dbReference type="PDBsum" id="8IDY"/>
<dbReference type="PDBsum" id="8IE3"/>
<dbReference type="PDBsum" id="8IFD"/>
<dbReference type="PDBsum" id="8IFE"/>
<dbReference type="PDBsum" id="8INE"/>
<dbReference type="PDBsum" id="8INF"/>
<dbReference type="PDBsum" id="8INK"/>
<dbReference type="PDBsum" id="8IPD"/>
<dbReference type="PDBsum" id="8IPX"/>
<dbReference type="PDBsum" id="8IPY"/>
<dbReference type="PDBsum" id="8IR1"/>
<dbReference type="PDBsum" id="8IR3"/>
<dbReference type="PDBsum" id="8JDJ"/>
<dbReference type="PDBsum" id="8JDK"/>
<dbReference type="PDBsum" id="8JDL"/>
<dbReference type="PDBsum" id="8JDM"/>
<dbReference type="PDBsum" id="8K2C"/>
<dbReference type="PDBsum" id="8OHD"/>
<dbReference type="PDBsum" id="8OJ0"/>
<dbReference type="PDBsum" id="8OJ5"/>
<dbReference type="PDBsum" id="8OJ8"/>
<dbReference type="PDBsum" id="8QFD"/>
<dbReference type="PDBsum" id="8QOI"/>
<dbReference type="PDBsum" id="8QYX"/>
<dbReference type="PDBsum" id="8RL2"/>
<dbReference type="PDBsum" id="8UKB"/>
<dbReference type="PDBsum" id="8XSX"/>
<dbReference type="PDBsum" id="8XSY"/>
<dbReference type="PDBsum" id="8XSZ"/>
<dbReference type="PDBsum" id="8Y0W"/>
<dbReference type="PDBsum" id="8Y0X"/>
<dbReference type="PDBsum" id="8YOO"/>
<dbReference type="PDBsum" id="8YOP"/>
<dbReference type="PDBsum" id="9C3H"/>
<dbReference type="PDBsum" id="9FPZ"/>
<dbReference type="PDBsum" id="9FQ0"/>
<dbReference type="PDBsum" id="9G8M"/>
<dbReference type="PDBsum" id="9GMO"/>
<dbReference type="EMDB" id="EMD-0948"/>
<dbReference type="EMDB" id="EMD-0963"/>
<dbReference type="EMDB" id="EMD-0964"/>
<dbReference type="EMDB" id="EMD-0978"/>
<dbReference type="EMDB" id="EMD-10668"/>
<dbReference type="EMDB" id="EMD-10674"/>
<dbReference type="EMDB" id="EMD-10690"/>
<dbReference type="EMDB" id="EMD-10709"/>
<dbReference type="EMDB" id="EMD-11098"/>
<dbReference type="EMDB" id="EMD-11099"/>
<dbReference type="EMDB" id="EMD-11100"/>
<dbReference type="EMDB" id="EMD-11288"/>
<dbReference type="EMDB" id="EMD-11289"/>
<dbReference type="EMDB" id="EMD-11292"/>
<dbReference type="EMDB" id="EMD-11299"/>
<dbReference type="EMDB" id="EMD-12189"/>
<dbReference type="EMDB" id="EMD-13094"/>
<dbReference type="EMDB" id="EMD-14181"/>
<dbReference type="EMDB" id="EMD-15113"/>
<dbReference type="EMDB" id="EMD-16880"/>
<dbReference type="EMDB" id="EMD-16902"/>
<dbReference type="EMDB" id="EMD-16905"/>
<dbReference type="EMDB" id="EMD-16908"/>
<dbReference type="EMDB" id="EMD-18382"/>
<dbReference type="EMDB" id="EMD-18539"/>
<dbReference type="EMDB" id="EMD-18765"/>
<dbReference type="EMDB" id="EMD-19330"/>
<dbReference type="EMDB" id="EMD-29253"/>
<dbReference type="EMDB" id="EMD-29255"/>
<dbReference type="EMDB" id="EMD-29257"/>
<dbReference type="EMDB" id="EMD-29259"/>
<dbReference type="EMDB" id="EMD-29260"/>
<dbReference type="EMDB" id="EMD-29261"/>
<dbReference type="EMDB" id="EMD-29262"/>
<dbReference type="EMDB" id="EMD-29263"/>
<dbReference type="EMDB" id="EMD-29265"/>
<dbReference type="EMDB" id="EMD-29266"/>
<dbReference type="EMDB" id="EMD-29267"/>
<dbReference type="EMDB" id="EMD-29268"/>
<dbReference type="EMDB" id="EMD-29269"/>
<dbReference type="EMDB" id="EMD-29271"/>
<dbReference type="EMDB" id="EMD-29272"/>
<dbReference type="EMDB" id="EMD-29273"/>
<dbReference type="EMDB" id="EMD-29274"/>
<dbReference type="EMDB" id="EMD-29275"/>
<dbReference type="EMDB" id="EMD-29276"/>
<dbReference type="EMDB" id="EMD-29277"/>
<dbReference type="EMDB" id="EMD-29757"/>
<dbReference type="EMDB" id="EMD-29758"/>
<dbReference type="EMDB" id="EMD-29759"/>
<dbReference type="EMDB" id="EMD-29760"/>
<dbReference type="EMDB" id="EMD-29771"/>
<dbReference type="EMDB" id="EMD-31465"/>
<dbReference type="EMDB" id="EMD-33329"/>
<dbReference type="EMDB" id="EMD-33330"/>
<dbReference type="EMDB" id="EMD-35370"/>
<dbReference type="EMDB" id="EMD-35371"/>
<dbReference type="EMDB" id="EMD-35375"/>
<dbReference type="EMDB" id="EMD-35413"/>
<dbReference type="EMDB" id="EMD-35414"/>
<dbReference type="EMDB" id="EMD-35596"/>
<dbReference type="EMDB" id="EMD-35597"/>
<dbReference type="EMDB" id="EMD-35599"/>
<dbReference type="EMDB" id="EMD-35639"/>
<dbReference type="EMDB" id="EMD-35649"/>
<dbReference type="EMDB" id="EMD-35651"/>
<dbReference type="EMDB" id="EMD-35672"/>
<dbReference type="EMDB" id="EMD-35673"/>
<dbReference type="EMDB" id="EMD-36178"/>
<dbReference type="EMDB" id="EMD-36179"/>
<dbReference type="EMDB" id="EMD-36180"/>
<dbReference type="EMDB" id="EMD-36181"/>
<dbReference type="EMDB" id="EMD-36838"/>
<dbReference type="EMDB" id="EMD-38629"/>
<dbReference type="EMDB" id="EMD-38630"/>
<dbReference type="EMDB" id="EMD-38631"/>
<dbReference type="EMDB" id="EMD-3883"/>
<dbReference type="EMDB" id="EMD-39455"/>
<dbReference type="EMDB" id="EMD-39456"/>
<dbReference type="EMDB" id="EMD-40205"/>
<dbReference type="EMDB" id="EMD-4070"/>
<dbReference type="EMDB" id="EMD-42351"/>
<dbReference type="EMDB" id="EMD-45170"/>
<dbReference type="EMDB" id="EMD-50641"/>
<dbReference type="EMDB" id="EMD-50642"/>
<dbReference type="EMDB" id="EMD-51132"/>
<dbReference type="EMDB" id="EMD-51452"/>
<dbReference type="EMDB" id="EMD-9701"/>
<dbReference type="EMDB" id="EMD-9702"/>
<dbReference type="EMDB" id="EMD-9703"/>
<dbReference type="SMR" id="P46779"/>
<dbReference type="BioGRID" id="112077">
    <property type="interactions" value="487"/>
</dbReference>
<dbReference type="ComplexPortal" id="CPX-5183">
    <property type="entry name" value="60S cytosolic large ribosomal subunit"/>
</dbReference>
<dbReference type="ComplexPortal" id="CPX-7664">
    <property type="entry name" value="60S cytosolic large ribosomal subunit, testis-specific variant"/>
</dbReference>
<dbReference type="ComplexPortal" id="CPX-7665">
    <property type="entry name" value="60S cytosolic large ribosomal subunit, striated muscle variant"/>
</dbReference>
<dbReference type="CORUM" id="P46779"/>
<dbReference type="FunCoup" id="P46779">
    <property type="interactions" value="1589"/>
</dbReference>
<dbReference type="IntAct" id="P46779">
    <property type="interactions" value="302"/>
</dbReference>
<dbReference type="MINT" id="P46779"/>
<dbReference type="STRING" id="9606.ENSP00000452763"/>
<dbReference type="GlyGen" id="P46779">
    <property type="glycosylation" value="2 sites, 1 N-linked glycan (1 site), 1 O-linked glycan (1 site)"/>
</dbReference>
<dbReference type="iPTMnet" id="P46779"/>
<dbReference type="MetOSite" id="P46779"/>
<dbReference type="PhosphoSitePlus" id="P46779"/>
<dbReference type="SwissPalm" id="P46779"/>
<dbReference type="BioMuta" id="RPL28"/>
<dbReference type="jPOST" id="P46779"/>
<dbReference type="MassIVE" id="P46779"/>
<dbReference type="PaxDb" id="9606-ENSP00000452909"/>
<dbReference type="PeptideAtlas" id="P46779"/>
<dbReference type="ProteomicsDB" id="19127"/>
<dbReference type="ProteomicsDB" id="33973"/>
<dbReference type="ProteomicsDB" id="55761">
    <molecule id="P46779-1"/>
</dbReference>
<dbReference type="ProteomicsDB" id="55762">
    <molecule id="P46779-2"/>
</dbReference>
<dbReference type="ProteomicsDB" id="9416"/>
<dbReference type="Pumba" id="P46779"/>
<dbReference type="TopDownProteomics" id="P46779-1">
    <molecule id="P46779-1"/>
</dbReference>
<dbReference type="Antibodypedia" id="46430">
    <property type="antibodies" value="176 antibodies from 25 providers"/>
</dbReference>
<dbReference type="DNASU" id="6158"/>
<dbReference type="Ensembl" id="ENST00000344063.7">
    <molecule id="P46779-1"/>
    <property type="protein sequence ID" value="ENSP00000342787.3"/>
    <property type="gene ID" value="ENSG00000108107.15"/>
</dbReference>
<dbReference type="Ensembl" id="ENST00000428193.6">
    <molecule id="P46779-4"/>
    <property type="protein sequence ID" value="ENSP00000391665.2"/>
    <property type="gene ID" value="ENSG00000108107.15"/>
</dbReference>
<dbReference type="Ensembl" id="ENST00000431533.6">
    <molecule id="P46779-5"/>
    <property type="protein sequence ID" value="ENSP00000400596.2"/>
    <property type="gene ID" value="ENSG00000108107.15"/>
</dbReference>
<dbReference type="Ensembl" id="ENST00000558815.5">
    <molecule id="P46779-3"/>
    <property type="protein sequence ID" value="ENSP00000452909.1"/>
    <property type="gene ID" value="ENSG00000108107.15"/>
</dbReference>
<dbReference type="Ensembl" id="ENST00000559463.5">
    <molecule id="P46779-1"/>
    <property type="protein sequence ID" value="ENSP00000453319.1"/>
    <property type="gene ID" value="ENSG00000108107.15"/>
</dbReference>
<dbReference type="Ensembl" id="ENST00000560583.5">
    <molecule id="P46779-2"/>
    <property type="protein sequence ID" value="ENSP00000453029.1"/>
    <property type="gene ID" value="ENSG00000108107.15"/>
</dbReference>
<dbReference type="GeneID" id="6158"/>
<dbReference type="KEGG" id="hsa:6158"/>
<dbReference type="MANE-Select" id="ENST00000344063.7">
    <property type="protein sequence ID" value="ENSP00000342787.3"/>
    <property type="RefSeq nucleotide sequence ID" value="NM_000991.5"/>
    <property type="RefSeq protein sequence ID" value="NP_000982.2"/>
</dbReference>
<dbReference type="UCSC" id="uc002qkv.4">
    <molecule id="P46779-1"/>
    <property type="organism name" value="human"/>
</dbReference>
<dbReference type="AGR" id="HGNC:10330"/>
<dbReference type="CTD" id="6158"/>
<dbReference type="DisGeNET" id="6158"/>
<dbReference type="GeneCards" id="RPL28"/>
<dbReference type="HGNC" id="HGNC:10330">
    <property type="gene designation" value="RPL28"/>
</dbReference>
<dbReference type="HPA" id="ENSG00000108107">
    <property type="expression patterns" value="Low tissue specificity"/>
</dbReference>
<dbReference type="MIM" id="603638">
    <property type="type" value="gene"/>
</dbReference>
<dbReference type="neXtProt" id="NX_P46779"/>
<dbReference type="OpenTargets" id="ENSG00000108107"/>
<dbReference type="PharmGKB" id="PA34710"/>
<dbReference type="VEuPathDB" id="HostDB:ENSG00000108107"/>
<dbReference type="eggNOG" id="KOG3412">
    <property type="taxonomic scope" value="Eukaryota"/>
</dbReference>
<dbReference type="GeneTree" id="ENSGT00390000008732"/>
<dbReference type="HOGENOM" id="CLU_106801_1_0_1"/>
<dbReference type="InParanoid" id="P46779"/>
<dbReference type="OMA" id="WMIIRNC"/>
<dbReference type="OrthoDB" id="338850at2759"/>
<dbReference type="PAN-GO" id="P46779">
    <property type="GO annotations" value="1 GO annotation based on evolutionary models"/>
</dbReference>
<dbReference type="PhylomeDB" id="P46779"/>
<dbReference type="TreeFam" id="TF300173"/>
<dbReference type="PathwayCommons" id="P46779"/>
<dbReference type="Reactome" id="R-HSA-156827">
    <property type="pathway name" value="L13a-mediated translational silencing of Ceruloplasmin expression"/>
</dbReference>
<dbReference type="Reactome" id="R-HSA-156902">
    <property type="pathway name" value="Peptide chain elongation"/>
</dbReference>
<dbReference type="Reactome" id="R-HSA-1799339">
    <property type="pathway name" value="SRP-dependent cotranslational protein targeting to membrane"/>
</dbReference>
<dbReference type="Reactome" id="R-HSA-192823">
    <property type="pathway name" value="Viral mRNA Translation"/>
</dbReference>
<dbReference type="Reactome" id="R-HSA-2408557">
    <property type="pathway name" value="Selenocysteine synthesis"/>
</dbReference>
<dbReference type="Reactome" id="R-HSA-6791226">
    <property type="pathway name" value="Major pathway of rRNA processing in the nucleolus and cytosol"/>
</dbReference>
<dbReference type="Reactome" id="R-HSA-72689">
    <property type="pathway name" value="Formation of a pool of free 40S subunits"/>
</dbReference>
<dbReference type="Reactome" id="R-HSA-72706">
    <property type="pathway name" value="GTP hydrolysis and joining of the 60S ribosomal subunit"/>
</dbReference>
<dbReference type="Reactome" id="R-HSA-72764">
    <property type="pathway name" value="Eukaryotic Translation Termination"/>
</dbReference>
<dbReference type="Reactome" id="R-HSA-9010553">
    <property type="pathway name" value="Regulation of expression of SLITs and ROBOs"/>
</dbReference>
<dbReference type="Reactome" id="R-HSA-9633012">
    <property type="pathway name" value="Response of EIF2AK4 (GCN2) to amino acid deficiency"/>
</dbReference>
<dbReference type="Reactome" id="R-HSA-975956">
    <property type="pathway name" value="Nonsense Mediated Decay (NMD) independent of the Exon Junction Complex (EJC)"/>
</dbReference>
<dbReference type="Reactome" id="R-HSA-975957">
    <property type="pathway name" value="Nonsense Mediated Decay (NMD) enhanced by the Exon Junction Complex (EJC)"/>
</dbReference>
<dbReference type="SignaLink" id="P46779"/>
<dbReference type="SIGNOR" id="P46779"/>
<dbReference type="BioGRID-ORCS" id="6158">
    <property type="hits" value="655 hits in 1180 CRISPR screens"/>
</dbReference>
<dbReference type="CD-CODE" id="91857CE7">
    <property type="entry name" value="Nucleolus"/>
</dbReference>
<dbReference type="ChiTaRS" id="RPL28">
    <property type="organism name" value="human"/>
</dbReference>
<dbReference type="GeneWiki" id="60S_ribosomal_protein_L28"/>
<dbReference type="GenomeRNAi" id="6158"/>
<dbReference type="Pharos" id="P46779">
    <property type="development level" value="Tbio"/>
</dbReference>
<dbReference type="PRO" id="PR:P46779"/>
<dbReference type="Proteomes" id="UP000005640">
    <property type="component" value="Chromosome 19"/>
</dbReference>
<dbReference type="RNAct" id="P46779">
    <property type="molecule type" value="protein"/>
</dbReference>
<dbReference type="Bgee" id="ENSG00000108107">
    <property type="expression patterns" value="Expressed in adult organism and 207 other cell types or tissues"/>
</dbReference>
<dbReference type="ExpressionAtlas" id="P46779">
    <property type="expression patterns" value="baseline and differential"/>
</dbReference>
<dbReference type="GO" id="GO:0044297">
    <property type="term" value="C:cell body"/>
    <property type="evidence" value="ECO:0000314"/>
    <property type="project" value="ParkinsonsUK-UCL"/>
</dbReference>
<dbReference type="GO" id="GO:0005737">
    <property type="term" value="C:cytoplasm"/>
    <property type="evidence" value="ECO:0000303"/>
    <property type="project" value="ComplexPortal"/>
</dbReference>
<dbReference type="GO" id="GO:0036464">
    <property type="term" value="C:cytoplasmic ribonucleoprotein granule"/>
    <property type="evidence" value="ECO:0000314"/>
    <property type="project" value="ParkinsonsUK-UCL"/>
</dbReference>
<dbReference type="GO" id="GO:0005829">
    <property type="term" value="C:cytosol"/>
    <property type="evidence" value="ECO:0000304"/>
    <property type="project" value="Reactome"/>
</dbReference>
<dbReference type="GO" id="GO:0022625">
    <property type="term" value="C:cytosolic large ribosomal subunit"/>
    <property type="evidence" value="ECO:0000314"/>
    <property type="project" value="UniProtKB"/>
</dbReference>
<dbReference type="GO" id="GO:0022626">
    <property type="term" value="C:cytosolic ribosome"/>
    <property type="evidence" value="ECO:0000314"/>
    <property type="project" value="FlyBase"/>
</dbReference>
<dbReference type="GO" id="GO:0030425">
    <property type="term" value="C:dendrite"/>
    <property type="evidence" value="ECO:0000314"/>
    <property type="project" value="ParkinsonsUK-UCL"/>
</dbReference>
<dbReference type="GO" id="GO:0070062">
    <property type="term" value="C:extracellular exosome"/>
    <property type="evidence" value="ECO:0007005"/>
    <property type="project" value="UniProtKB"/>
</dbReference>
<dbReference type="GO" id="GO:0016020">
    <property type="term" value="C:membrane"/>
    <property type="evidence" value="ECO:0007005"/>
    <property type="project" value="UniProtKB"/>
</dbReference>
<dbReference type="GO" id="GO:0045202">
    <property type="term" value="C:synapse"/>
    <property type="evidence" value="ECO:0007669"/>
    <property type="project" value="Ensembl"/>
</dbReference>
<dbReference type="GO" id="GO:0003723">
    <property type="term" value="F:RNA binding"/>
    <property type="evidence" value="ECO:0007005"/>
    <property type="project" value="UniProtKB"/>
</dbReference>
<dbReference type="GO" id="GO:0003735">
    <property type="term" value="F:structural constituent of ribosome"/>
    <property type="evidence" value="ECO:0000314"/>
    <property type="project" value="UniProtKB"/>
</dbReference>
<dbReference type="GO" id="GO:0002181">
    <property type="term" value="P:cytoplasmic translation"/>
    <property type="evidence" value="ECO:0000303"/>
    <property type="project" value="ComplexPortal"/>
</dbReference>
<dbReference type="GO" id="GO:0006412">
    <property type="term" value="P:translation"/>
    <property type="evidence" value="ECO:0000304"/>
    <property type="project" value="ProtInc"/>
</dbReference>
<dbReference type="FunFam" id="3.30.390.110:FF:000002">
    <property type="entry name" value="60S ribosomal protein L28"/>
    <property type="match status" value="1"/>
</dbReference>
<dbReference type="Gene3D" id="3.30.390.110">
    <property type="match status" value="1"/>
</dbReference>
<dbReference type="InterPro" id="IPR002672">
    <property type="entry name" value="Ribosomal_eL28"/>
</dbReference>
<dbReference type="InterPro" id="IPR029004">
    <property type="entry name" value="Ribosomal_eL28/Mak16"/>
</dbReference>
<dbReference type="PANTHER" id="PTHR10544">
    <property type="entry name" value="60S RIBOSOMAL PROTEIN L28"/>
    <property type="match status" value="1"/>
</dbReference>
<dbReference type="Pfam" id="PF01778">
    <property type="entry name" value="Ribosomal_L28e"/>
    <property type="match status" value="1"/>
</dbReference>
<gene>
    <name type="primary">RPL28</name>
</gene>
<keyword id="KW-0002">3D-structure</keyword>
<keyword id="KW-0007">Acetylation</keyword>
<keyword id="KW-0025">Alternative splicing</keyword>
<keyword id="KW-0963">Cytoplasm</keyword>
<keyword id="KW-0903">Direct protein sequencing</keyword>
<keyword id="KW-1017">Isopeptide bond</keyword>
<keyword id="KW-0597">Phosphoprotein</keyword>
<keyword id="KW-1267">Proteomics identification</keyword>
<keyword id="KW-1185">Reference proteome</keyword>
<keyword id="KW-0687">Ribonucleoprotein</keyword>
<keyword id="KW-0689">Ribosomal protein</keyword>
<keyword id="KW-0832">Ubl conjugation</keyword>
<organism>
    <name type="scientific">Homo sapiens</name>
    <name type="common">Human</name>
    <dbReference type="NCBI Taxonomy" id="9606"/>
    <lineage>
        <taxon>Eukaryota</taxon>
        <taxon>Metazoa</taxon>
        <taxon>Chordata</taxon>
        <taxon>Craniata</taxon>
        <taxon>Vertebrata</taxon>
        <taxon>Euteleostomi</taxon>
        <taxon>Mammalia</taxon>
        <taxon>Eutheria</taxon>
        <taxon>Euarchontoglires</taxon>
        <taxon>Primates</taxon>
        <taxon>Haplorrhini</taxon>
        <taxon>Catarrhini</taxon>
        <taxon>Hominidae</taxon>
        <taxon>Homo</taxon>
    </lineage>
</organism>
<protein>
    <recommendedName>
        <fullName evidence="7">Large ribosomal subunit protein eL28</fullName>
    </recommendedName>
    <alternativeName>
        <fullName>60S ribosomal protein L28</fullName>
    </alternativeName>
</protein>